<evidence type="ECO:0000255" key="1">
    <source>
        <dbReference type="HAMAP-Rule" id="MF_01337"/>
    </source>
</evidence>
<evidence type="ECO:0000305" key="2"/>
<protein>
    <recommendedName>
        <fullName evidence="1">Large ribosomal subunit protein uL18</fullName>
    </recommendedName>
    <alternativeName>
        <fullName evidence="2">50S ribosomal protein L18</fullName>
    </alternativeName>
</protein>
<accession>P66077</accession>
<accession>A0A1R3XW70</accession>
<accession>P95068</accession>
<accession>X2BFY4</accession>
<gene>
    <name evidence="1" type="primary">rplR</name>
    <name type="ordered locus">BQ2027_MB0741</name>
</gene>
<comment type="function">
    <text evidence="1">This is one of the proteins that bind and probably mediate the attachment of the 5S RNA into the large ribosomal subunit, where it forms part of the central protuberance.</text>
</comment>
<comment type="subunit">
    <text evidence="1">Part of the 50S ribosomal subunit; part of the 5S rRNA/L5/L18/L25 subcomplex. Contacts the 5S and 23S rRNAs.</text>
</comment>
<comment type="similarity">
    <text evidence="1">Belongs to the universal ribosomal protein uL18 family.</text>
</comment>
<sequence>MAQSVSATRRISRLRRHTRLRKKLSGTAERPRLVVHRSARHIHVQLVNDLNGTTVAAASSIEADVRGVPGDKKARSVRVGQLIAERAKAAGIDTVVFDRGGYTYGGRIAALADAARENGLSF</sequence>
<dbReference type="EMBL" id="LT708304">
    <property type="protein sequence ID" value="SIT99340.1"/>
    <property type="molecule type" value="Genomic_DNA"/>
</dbReference>
<dbReference type="RefSeq" id="NP_854399.1">
    <property type="nucleotide sequence ID" value="NC_002945.3"/>
</dbReference>
<dbReference type="RefSeq" id="WP_003403677.1">
    <property type="nucleotide sequence ID" value="NC_002945.4"/>
</dbReference>
<dbReference type="SMR" id="P66077"/>
<dbReference type="GeneID" id="45424685"/>
<dbReference type="KEGG" id="mbo:BQ2027_MB0741"/>
<dbReference type="PATRIC" id="fig|233413.5.peg.808"/>
<dbReference type="Proteomes" id="UP000001419">
    <property type="component" value="Chromosome"/>
</dbReference>
<dbReference type="GO" id="GO:0022625">
    <property type="term" value="C:cytosolic large ribosomal subunit"/>
    <property type="evidence" value="ECO:0007669"/>
    <property type="project" value="TreeGrafter"/>
</dbReference>
<dbReference type="GO" id="GO:0008097">
    <property type="term" value="F:5S rRNA binding"/>
    <property type="evidence" value="ECO:0007669"/>
    <property type="project" value="TreeGrafter"/>
</dbReference>
<dbReference type="GO" id="GO:0003735">
    <property type="term" value="F:structural constituent of ribosome"/>
    <property type="evidence" value="ECO:0007669"/>
    <property type="project" value="InterPro"/>
</dbReference>
<dbReference type="GO" id="GO:0006412">
    <property type="term" value="P:translation"/>
    <property type="evidence" value="ECO:0007669"/>
    <property type="project" value="UniProtKB-UniRule"/>
</dbReference>
<dbReference type="CDD" id="cd00432">
    <property type="entry name" value="Ribosomal_L18_L5e"/>
    <property type="match status" value="1"/>
</dbReference>
<dbReference type="FunFam" id="3.30.420.100:FF:000001">
    <property type="entry name" value="50S ribosomal protein L18"/>
    <property type="match status" value="1"/>
</dbReference>
<dbReference type="Gene3D" id="3.30.420.100">
    <property type="match status" value="1"/>
</dbReference>
<dbReference type="HAMAP" id="MF_01337_B">
    <property type="entry name" value="Ribosomal_uL18_B"/>
    <property type="match status" value="1"/>
</dbReference>
<dbReference type="InterPro" id="IPR004389">
    <property type="entry name" value="Ribosomal_uL18_bac-type"/>
</dbReference>
<dbReference type="InterPro" id="IPR005484">
    <property type="entry name" value="Ribosomal_uL18_bac/euk"/>
</dbReference>
<dbReference type="NCBIfam" id="TIGR00060">
    <property type="entry name" value="L18_bact"/>
    <property type="match status" value="1"/>
</dbReference>
<dbReference type="PANTHER" id="PTHR12899">
    <property type="entry name" value="39S RIBOSOMAL PROTEIN L18, MITOCHONDRIAL"/>
    <property type="match status" value="1"/>
</dbReference>
<dbReference type="PANTHER" id="PTHR12899:SF3">
    <property type="entry name" value="LARGE RIBOSOMAL SUBUNIT PROTEIN UL18M"/>
    <property type="match status" value="1"/>
</dbReference>
<dbReference type="Pfam" id="PF00861">
    <property type="entry name" value="Ribosomal_L18p"/>
    <property type="match status" value="1"/>
</dbReference>
<dbReference type="SUPFAM" id="SSF53137">
    <property type="entry name" value="Translational machinery components"/>
    <property type="match status" value="1"/>
</dbReference>
<name>RL18_MYCBO</name>
<proteinExistence type="inferred from homology"/>
<reference key="1">
    <citation type="journal article" date="2003" name="Proc. Natl. Acad. Sci. U.S.A.">
        <title>The complete genome sequence of Mycobacterium bovis.</title>
        <authorList>
            <person name="Garnier T."/>
            <person name="Eiglmeier K."/>
            <person name="Camus J.-C."/>
            <person name="Medina N."/>
            <person name="Mansoor H."/>
            <person name="Pryor M."/>
            <person name="Duthoy S."/>
            <person name="Grondin S."/>
            <person name="Lacroix C."/>
            <person name="Monsempe C."/>
            <person name="Simon S."/>
            <person name="Harris B."/>
            <person name="Atkin R."/>
            <person name="Doggett J."/>
            <person name="Mayes R."/>
            <person name="Keating L."/>
            <person name="Wheeler P.R."/>
            <person name="Parkhill J."/>
            <person name="Barrell B.G."/>
            <person name="Cole S.T."/>
            <person name="Gordon S.V."/>
            <person name="Hewinson R.G."/>
        </authorList>
    </citation>
    <scope>NUCLEOTIDE SEQUENCE [LARGE SCALE GENOMIC DNA]</scope>
    <source>
        <strain>ATCC BAA-935 / AF2122/97</strain>
    </source>
</reference>
<reference key="2">
    <citation type="journal article" date="2017" name="Genome Announc.">
        <title>Updated reference genome sequence and annotation of Mycobacterium bovis AF2122/97.</title>
        <authorList>
            <person name="Malone K.M."/>
            <person name="Farrell D."/>
            <person name="Stuber T.P."/>
            <person name="Schubert O.T."/>
            <person name="Aebersold R."/>
            <person name="Robbe-Austerman S."/>
            <person name="Gordon S.V."/>
        </authorList>
    </citation>
    <scope>NUCLEOTIDE SEQUENCE [LARGE SCALE GENOMIC DNA]</scope>
    <scope>GENOME REANNOTATION</scope>
    <source>
        <strain>ATCC BAA-935 / AF2122/97</strain>
    </source>
</reference>
<keyword id="KW-1185">Reference proteome</keyword>
<keyword id="KW-0687">Ribonucleoprotein</keyword>
<keyword id="KW-0689">Ribosomal protein</keyword>
<keyword id="KW-0694">RNA-binding</keyword>
<keyword id="KW-0699">rRNA-binding</keyword>
<organism>
    <name type="scientific">Mycobacterium bovis (strain ATCC BAA-935 / AF2122/97)</name>
    <dbReference type="NCBI Taxonomy" id="233413"/>
    <lineage>
        <taxon>Bacteria</taxon>
        <taxon>Bacillati</taxon>
        <taxon>Actinomycetota</taxon>
        <taxon>Actinomycetes</taxon>
        <taxon>Mycobacteriales</taxon>
        <taxon>Mycobacteriaceae</taxon>
        <taxon>Mycobacterium</taxon>
        <taxon>Mycobacterium tuberculosis complex</taxon>
    </lineage>
</organism>
<feature type="chain" id="PRO_0000131293" description="Large ribosomal subunit protein uL18">
    <location>
        <begin position="1"/>
        <end position="122"/>
    </location>
</feature>